<protein>
    <recommendedName>
        <fullName evidence="2">ATP synthase subunit beta, chloroplastic</fullName>
        <ecNumber evidence="2">7.1.2.2</ecNumber>
    </recommendedName>
    <alternativeName>
        <fullName evidence="2">ATP synthase F1 sector subunit beta</fullName>
    </alternativeName>
    <alternativeName>
        <fullName evidence="2">F-ATPase subunit beta</fullName>
    </alternativeName>
</protein>
<organism>
    <name type="scientific">Crucihimalaya wallichii</name>
    <name type="common">Rock-cress</name>
    <name type="synonym">Arabidopsis campestris</name>
    <dbReference type="NCBI Taxonomy" id="78192"/>
    <lineage>
        <taxon>Eukaryota</taxon>
        <taxon>Viridiplantae</taxon>
        <taxon>Streptophyta</taxon>
        <taxon>Embryophyta</taxon>
        <taxon>Tracheophyta</taxon>
        <taxon>Spermatophyta</taxon>
        <taxon>Magnoliopsida</taxon>
        <taxon>eudicotyledons</taxon>
        <taxon>Gunneridae</taxon>
        <taxon>Pentapetalae</taxon>
        <taxon>rosids</taxon>
        <taxon>malvids</taxon>
        <taxon>Brassicales</taxon>
        <taxon>Brassicaceae</taxon>
        <taxon>Crucihimalayeae</taxon>
        <taxon>Crucihimalaya</taxon>
    </lineage>
</organism>
<proteinExistence type="inferred from homology"/>
<accession>A4QKT8</accession>
<keyword id="KW-0066">ATP synthesis</keyword>
<keyword id="KW-0067">ATP-binding</keyword>
<keyword id="KW-0139">CF(1)</keyword>
<keyword id="KW-0150">Chloroplast</keyword>
<keyword id="KW-0375">Hydrogen ion transport</keyword>
<keyword id="KW-0406">Ion transport</keyword>
<keyword id="KW-0472">Membrane</keyword>
<keyword id="KW-0547">Nucleotide-binding</keyword>
<keyword id="KW-0597">Phosphoprotein</keyword>
<keyword id="KW-0934">Plastid</keyword>
<keyword id="KW-0793">Thylakoid</keyword>
<keyword id="KW-1278">Translocase</keyword>
<keyword id="KW-0813">Transport</keyword>
<geneLocation type="chloroplast"/>
<evidence type="ECO:0000250" key="1">
    <source>
        <dbReference type="UniProtKB" id="P19366"/>
    </source>
</evidence>
<evidence type="ECO:0000255" key="2">
    <source>
        <dbReference type="HAMAP-Rule" id="MF_01347"/>
    </source>
</evidence>
<name>ATPB_CRUWA</name>
<feature type="chain" id="PRO_0000339614" description="ATP synthase subunit beta, chloroplastic">
    <location>
        <begin position="1"/>
        <end position="498"/>
    </location>
</feature>
<feature type="binding site" evidence="2">
    <location>
        <begin position="172"/>
        <end position="179"/>
    </location>
    <ligand>
        <name>ATP</name>
        <dbReference type="ChEBI" id="CHEBI:30616"/>
    </ligand>
</feature>
<feature type="modified residue" description="Phosphothreonine" evidence="1">
    <location>
        <position position="6"/>
    </location>
</feature>
<feature type="modified residue" description="Phosphoserine" evidence="1">
    <location>
        <position position="13"/>
    </location>
</feature>
<reference key="1">
    <citation type="submission" date="2007-03" db="EMBL/GenBank/DDBJ databases">
        <title>Sequencing analysis of Crucihimalaya wallichii chloroplast DNA.</title>
        <authorList>
            <person name="Hosouchi T."/>
            <person name="Tsuruoka H."/>
            <person name="Kotani H."/>
        </authorList>
    </citation>
    <scope>NUCLEOTIDE SEQUENCE [LARGE SCALE GENOMIC DNA]</scope>
</reference>
<comment type="function">
    <text evidence="2">Produces ATP from ADP in the presence of a proton gradient across the membrane. The catalytic sites are hosted primarily by the beta subunits.</text>
</comment>
<comment type="catalytic activity">
    <reaction evidence="2">
        <text>ATP + H2O + 4 H(+)(in) = ADP + phosphate + 5 H(+)(out)</text>
        <dbReference type="Rhea" id="RHEA:57720"/>
        <dbReference type="ChEBI" id="CHEBI:15377"/>
        <dbReference type="ChEBI" id="CHEBI:15378"/>
        <dbReference type="ChEBI" id="CHEBI:30616"/>
        <dbReference type="ChEBI" id="CHEBI:43474"/>
        <dbReference type="ChEBI" id="CHEBI:456216"/>
        <dbReference type="EC" id="7.1.2.2"/>
    </reaction>
</comment>
<comment type="subunit">
    <text evidence="2">F-type ATPases have 2 components, CF(1) - the catalytic core - and CF(0) - the membrane proton channel. CF(1) has five subunits: alpha(3), beta(3), gamma(1), delta(1), epsilon(1). CF(0) has four main subunits: a(1), b(1), b'(1) and c(9-12).</text>
</comment>
<comment type="subcellular location">
    <subcellularLocation>
        <location evidence="2">Plastid</location>
        <location evidence="2">Chloroplast thylakoid membrane</location>
        <topology evidence="2">Peripheral membrane protein</topology>
    </subcellularLocation>
</comment>
<comment type="similarity">
    <text evidence="2">Belongs to the ATPase alpha/beta chains family.</text>
</comment>
<gene>
    <name evidence="2" type="primary">atpB</name>
</gene>
<dbReference type="EC" id="7.1.2.2" evidence="2"/>
<dbReference type="EMBL" id="AP009372">
    <property type="protein sequence ID" value="BAF50293.1"/>
    <property type="molecule type" value="Genomic_DNA"/>
</dbReference>
<dbReference type="RefSeq" id="YP_001123469.1">
    <property type="nucleotide sequence ID" value="NC_009271.1"/>
</dbReference>
<dbReference type="SMR" id="A4QKT8"/>
<dbReference type="GeneID" id="4962680"/>
<dbReference type="GO" id="GO:0009535">
    <property type="term" value="C:chloroplast thylakoid membrane"/>
    <property type="evidence" value="ECO:0007669"/>
    <property type="project" value="UniProtKB-SubCell"/>
</dbReference>
<dbReference type="GO" id="GO:0005739">
    <property type="term" value="C:mitochondrion"/>
    <property type="evidence" value="ECO:0007669"/>
    <property type="project" value="GOC"/>
</dbReference>
<dbReference type="GO" id="GO:0045259">
    <property type="term" value="C:proton-transporting ATP synthase complex"/>
    <property type="evidence" value="ECO:0007669"/>
    <property type="project" value="UniProtKB-KW"/>
</dbReference>
<dbReference type="GO" id="GO:0005524">
    <property type="term" value="F:ATP binding"/>
    <property type="evidence" value="ECO:0007669"/>
    <property type="project" value="UniProtKB-UniRule"/>
</dbReference>
<dbReference type="GO" id="GO:0016887">
    <property type="term" value="F:ATP hydrolysis activity"/>
    <property type="evidence" value="ECO:0007669"/>
    <property type="project" value="InterPro"/>
</dbReference>
<dbReference type="GO" id="GO:0046933">
    <property type="term" value="F:proton-transporting ATP synthase activity, rotational mechanism"/>
    <property type="evidence" value="ECO:0007669"/>
    <property type="project" value="UniProtKB-UniRule"/>
</dbReference>
<dbReference type="GO" id="GO:0042776">
    <property type="term" value="P:proton motive force-driven mitochondrial ATP synthesis"/>
    <property type="evidence" value="ECO:0007669"/>
    <property type="project" value="TreeGrafter"/>
</dbReference>
<dbReference type="CDD" id="cd18110">
    <property type="entry name" value="ATP-synt_F1_beta_C"/>
    <property type="match status" value="1"/>
</dbReference>
<dbReference type="CDD" id="cd18115">
    <property type="entry name" value="ATP-synt_F1_beta_N"/>
    <property type="match status" value="1"/>
</dbReference>
<dbReference type="CDD" id="cd01133">
    <property type="entry name" value="F1-ATPase_beta_CD"/>
    <property type="match status" value="1"/>
</dbReference>
<dbReference type="FunFam" id="1.10.1140.10:FF:000001">
    <property type="entry name" value="ATP synthase subunit beta"/>
    <property type="match status" value="1"/>
</dbReference>
<dbReference type="FunFam" id="3.40.50.12240:FF:000006">
    <property type="entry name" value="ATP synthase subunit beta"/>
    <property type="match status" value="1"/>
</dbReference>
<dbReference type="FunFam" id="3.40.50.300:FF:000026">
    <property type="entry name" value="ATP synthase subunit beta"/>
    <property type="match status" value="1"/>
</dbReference>
<dbReference type="FunFam" id="2.40.10.170:FF:000002">
    <property type="entry name" value="ATP synthase subunit beta, chloroplastic"/>
    <property type="match status" value="1"/>
</dbReference>
<dbReference type="Gene3D" id="2.40.10.170">
    <property type="match status" value="1"/>
</dbReference>
<dbReference type="Gene3D" id="1.10.1140.10">
    <property type="entry name" value="Bovine Mitochondrial F1-atpase, Atp Synthase Beta Chain, Chain D, domain 3"/>
    <property type="match status" value="1"/>
</dbReference>
<dbReference type="Gene3D" id="3.40.50.300">
    <property type="entry name" value="P-loop containing nucleotide triphosphate hydrolases"/>
    <property type="match status" value="1"/>
</dbReference>
<dbReference type="HAMAP" id="MF_01347">
    <property type="entry name" value="ATP_synth_beta_bact"/>
    <property type="match status" value="1"/>
</dbReference>
<dbReference type="InterPro" id="IPR003593">
    <property type="entry name" value="AAA+_ATPase"/>
</dbReference>
<dbReference type="InterPro" id="IPR055190">
    <property type="entry name" value="ATP-synt_VA_C"/>
</dbReference>
<dbReference type="InterPro" id="IPR005722">
    <property type="entry name" value="ATP_synth_F1_bsu"/>
</dbReference>
<dbReference type="InterPro" id="IPR020003">
    <property type="entry name" value="ATPase_a/bsu_AS"/>
</dbReference>
<dbReference type="InterPro" id="IPR050053">
    <property type="entry name" value="ATPase_alpha/beta_chains"/>
</dbReference>
<dbReference type="InterPro" id="IPR004100">
    <property type="entry name" value="ATPase_F1/V1/A1_a/bsu_N"/>
</dbReference>
<dbReference type="InterPro" id="IPR036121">
    <property type="entry name" value="ATPase_F1/V1/A1_a/bsu_N_sf"/>
</dbReference>
<dbReference type="InterPro" id="IPR000194">
    <property type="entry name" value="ATPase_F1/V1/A1_a/bsu_nucl-bd"/>
</dbReference>
<dbReference type="InterPro" id="IPR024034">
    <property type="entry name" value="ATPase_F1/V1_b/a_C"/>
</dbReference>
<dbReference type="InterPro" id="IPR027417">
    <property type="entry name" value="P-loop_NTPase"/>
</dbReference>
<dbReference type="NCBIfam" id="TIGR01039">
    <property type="entry name" value="atpD"/>
    <property type="match status" value="1"/>
</dbReference>
<dbReference type="PANTHER" id="PTHR15184">
    <property type="entry name" value="ATP SYNTHASE"/>
    <property type="match status" value="1"/>
</dbReference>
<dbReference type="PANTHER" id="PTHR15184:SF71">
    <property type="entry name" value="ATP SYNTHASE SUBUNIT BETA, MITOCHONDRIAL"/>
    <property type="match status" value="1"/>
</dbReference>
<dbReference type="Pfam" id="PF00006">
    <property type="entry name" value="ATP-synt_ab"/>
    <property type="match status" value="1"/>
</dbReference>
<dbReference type="Pfam" id="PF02874">
    <property type="entry name" value="ATP-synt_ab_N"/>
    <property type="match status" value="1"/>
</dbReference>
<dbReference type="Pfam" id="PF22919">
    <property type="entry name" value="ATP-synt_VA_C"/>
    <property type="match status" value="1"/>
</dbReference>
<dbReference type="SMART" id="SM00382">
    <property type="entry name" value="AAA"/>
    <property type="match status" value="1"/>
</dbReference>
<dbReference type="SUPFAM" id="SSF47917">
    <property type="entry name" value="C-terminal domain of alpha and beta subunits of F1 ATP synthase"/>
    <property type="match status" value="1"/>
</dbReference>
<dbReference type="SUPFAM" id="SSF50615">
    <property type="entry name" value="N-terminal domain of alpha and beta subunits of F1 ATP synthase"/>
    <property type="match status" value="1"/>
</dbReference>
<dbReference type="SUPFAM" id="SSF52540">
    <property type="entry name" value="P-loop containing nucleoside triphosphate hydrolases"/>
    <property type="match status" value="1"/>
</dbReference>
<dbReference type="PROSITE" id="PS00152">
    <property type="entry name" value="ATPASE_ALPHA_BETA"/>
    <property type="match status" value="1"/>
</dbReference>
<sequence length="498" mass="53961">MRINPTTSDPEVSIREKKNLGRIAQIIGPVLDVAFPPGKMPNIYNALVVKGRDTLGQEINVTCEVQQLLGNNRVRAVAMSATEGLKRGMDVVDMGNPLSVPVGGATLGRIFNVLGEPVDNLGPVDTRTTSPIHKSAPAFIELDTKLSIFETGIKVVDLLAPYRRGGKIGLFGGAGVGKTVLIMELINNIAKAHGGVSVFGGVGERTREGNDLYMEMKESGVINEQNLAESKVALVYGQMNEPPGARMRVGLTALTMAEYFRDVNEQDVLLFIDNIFRFVQAGSEVSALLGRMPSAVGYQPTLSTEMGTLQERITSTKKGSITSIQAVYVPADDLTDPAPATTFAHLDATTVLSRGLAAKGIYPAVDPLDSTSTMLQPRIVGEEHYETAQQVKQTLQRYKELQDIIAILGLDELSEEDRLTVARARKIERFLSQPFFVAEVFTGSPGKYVGLAETIRGFKLILSGEFDSLPEQAFYLVGNIDEATAKATNLEMESKLKK</sequence>